<organism>
    <name type="scientific">Yersinia pestis bv. Antiqua (strain Antiqua)</name>
    <dbReference type="NCBI Taxonomy" id="360102"/>
    <lineage>
        <taxon>Bacteria</taxon>
        <taxon>Pseudomonadati</taxon>
        <taxon>Pseudomonadota</taxon>
        <taxon>Gammaproteobacteria</taxon>
        <taxon>Enterobacterales</taxon>
        <taxon>Yersiniaceae</taxon>
        <taxon>Yersinia</taxon>
    </lineage>
</organism>
<sequence length="185" mass="20710">MINEIRKDAEVRMEKCLEAFQNHISKIRTGRASPSILDGIQVEYYGTATPLRQLANIVVEDSRTLALTVFDRSLSAAVEKAIMTSDLGLNPSSAGTVIRVPLPALTEERRKDLIKVVRAEAEQGRVSIRNVRRDANDKVKALLKDKEISEDEDRRSQDDVQKLTDAYIKKVDAALAVKEAELMDF</sequence>
<dbReference type="EMBL" id="CP000308">
    <property type="protein sequence ID" value="ABG12491.1"/>
    <property type="molecule type" value="Genomic_DNA"/>
</dbReference>
<dbReference type="RefSeq" id="WP_002212134.1">
    <property type="nucleotide sequence ID" value="NZ_CP009906.1"/>
</dbReference>
<dbReference type="SMR" id="Q1CAN1"/>
<dbReference type="GeneID" id="57977514"/>
<dbReference type="KEGG" id="ypa:YPA_0523"/>
<dbReference type="Proteomes" id="UP000001971">
    <property type="component" value="Chromosome"/>
</dbReference>
<dbReference type="GO" id="GO:0005829">
    <property type="term" value="C:cytosol"/>
    <property type="evidence" value="ECO:0007669"/>
    <property type="project" value="GOC"/>
</dbReference>
<dbReference type="GO" id="GO:0043023">
    <property type="term" value="F:ribosomal large subunit binding"/>
    <property type="evidence" value="ECO:0007669"/>
    <property type="project" value="TreeGrafter"/>
</dbReference>
<dbReference type="GO" id="GO:0002184">
    <property type="term" value="P:cytoplasmic translational termination"/>
    <property type="evidence" value="ECO:0007669"/>
    <property type="project" value="TreeGrafter"/>
</dbReference>
<dbReference type="CDD" id="cd00520">
    <property type="entry name" value="RRF"/>
    <property type="match status" value="1"/>
</dbReference>
<dbReference type="FunFam" id="1.10.132.20:FF:000001">
    <property type="entry name" value="Ribosome-recycling factor"/>
    <property type="match status" value="1"/>
</dbReference>
<dbReference type="FunFam" id="3.30.1360.40:FF:000001">
    <property type="entry name" value="Ribosome-recycling factor"/>
    <property type="match status" value="1"/>
</dbReference>
<dbReference type="Gene3D" id="3.30.1360.40">
    <property type="match status" value="1"/>
</dbReference>
<dbReference type="Gene3D" id="1.10.132.20">
    <property type="entry name" value="Ribosome-recycling factor"/>
    <property type="match status" value="1"/>
</dbReference>
<dbReference type="HAMAP" id="MF_00040">
    <property type="entry name" value="RRF"/>
    <property type="match status" value="1"/>
</dbReference>
<dbReference type="InterPro" id="IPR002661">
    <property type="entry name" value="Ribosome_recyc_fac"/>
</dbReference>
<dbReference type="InterPro" id="IPR023584">
    <property type="entry name" value="Ribosome_recyc_fac_dom"/>
</dbReference>
<dbReference type="InterPro" id="IPR036191">
    <property type="entry name" value="RRF_sf"/>
</dbReference>
<dbReference type="NCBIfam" id="TIGR00496">
    <property type="entry name" value="frr"/>
    <property type="match status" value="1"/>
</dbReference>
<dbReference type="PANTHER" id="PTHR20982:SF3">
    <property type="entry name" value="MITOCHONDRIAL RIBOSOME RECYCLING FACTOR PSEUDO 1"/>
    <property type="match status" value="1"/>
</dbReference>
<dbReference type="PANTHER" id="PTHR20982">
    <property type="entry name" value="RIBOSOME RECYCLING FACTOR"/>
    <property type="match status" value="1"/>
</dbReference>
<dbReference type="Pfam" id="PF01765">
    <property type="entry name" value="RRF"/>
    <property type="match status" value="1"/>
</dbReference>
<dbReference type="SUPFAM" id="SSF55194">
    <property type="entry name" value="Ribosome recycling factor, RRF"/>
    <property type="match status" value="1"/>
</dbReference>
<comment type="function">
    <text evidence="1">Responsible for the release of ribosomes from messenger RNA at the termination of protein biosynthesis. May increase the efficiency of translation by recycling ribosomes from one round of translation to another.</text>
</comment>
<comment type="subcellular location">
    <subcellularLocation>
        <location evidence="1">Cytoplasm</location>
    </subcellularLocation>
</comment>
<comment type="similarity">
    <text evidence="1">Belongs to the RRF family.</text>
</comment>
<protein>
    <recommendedName>
        <fullName evidence="1">Ribosome-recycling factor</fullName>
        <shortName evidence="1">RRF</shortName>
    </recommendedName>
    <alternativeName>
        <fullName evidence="1">Ribosome-releasing factor</fullName>
    </alternativeName>
</protein>
<gene>
    <name evidence="1" type="primary">frr</name>
    <name type="ordered locus">YPA_0523</name>
</gene>
<keyword id="KW-0963">Cytoplasm</keyword>
<keyword id="KW-0648">Protein biosynthesis</keyword>
<feature type="chain" id="PRO_1000003314" description="Ribosome-recycling factor">
    <location>
        <begin position="1"/>
        <end position="185"/>
    </location>
</feature>
<accession>Q1CAN1</accession>
<proteinExistence type="inferred from homology"/>
<reference key="1">
    <citation type="journal article" date="2006" name="J. Bacteriol.">
        <title>Complete genome sequence of Yersinia pestis strains Antiqua and Nepal516: evidence of gene reduction in an emerging pathogen.</title>
        <authorList>
            <person name="Chain P.S.G."/>
            <person name="Hu P."/>
            <person name="Malfatti S.A."/>
            <person name="Radnedge L."/>
            <person name="Larimer F."/>
            <person name="Vergez L.M."/>
            <person name="Worsham P."/>
            <person name="Chu M.C."/>
            <person name="Andersen G.L."/>
        </authorList>
    </citation>
    <scope>NUCLEOTIDE SEQUENCE [LARGE SCALE GENOMIC DNA]</scope>
    <source>
        <strain>Antiqua</strain>
    </source>
</reference>
<evidence type="ECO:0000255" key="1">
    <source>
        <dbReference type="HAMAP-Rule" id="MF_00040"/>
    </source>
</evidence>
<name>RRF_YERPA</name>